<feature type="chain" id="PRO_1000089028" description="Argininosuccinate synthase">
    <location>
        <begin position="1"/>
        <end position="402"/>
    </location>
</feature>
<feature type="binding site" evidence="1">
    <location>
        <begin position="9"/>
        <end position="17"/>
    </location>
    <ligand>
        <name>ATP</name>
        <dbReference type="ChEBI" id="CHEBI:30616"/>
    </ligand>
</feature>
<feature type="binding site" evidence="1">
    <location>
        <position position="87"/>
    </location>
    <ligand>
        <name>L-citrulline</name>
        <dbReference type="ChEBI" id="CHEBI:57743"/>
    </ligand>
</feature>
<feature type="binding site" evidence="1">
    <location>
        <position position="117"/>
    </location>
    <ligand>
        <name>ATP</name>
        <dbReference type="ChEBI" id="CHEBI:30616"/>
    </ligand>
</feature>
<feature type="binding site" evidence="1">
    <location>
        <position position="119"/>
    </location>
    <ligand>
        <name>L-aspartate</name>
        <dbReference type="ChEBI" id="CHEBI:29991"/>
    </ligand>
</feature>
<feature type="binding site" evidence="1">
    <location>
        <position position="123"/>
    </location>
    <ligand>
        <name>L-aspartate</name>
        <dbReference type="ChEBI" id="CHEBI:29991"/>
    </ligand>
</feature>
<feature type="binding site" evidence="1">
    <location>
        <position position="123"/>
    </location>
    <ligand>
        <name>L-citrulline</name>
        <dbReference type="ChEBI" id="CHEBI:57743"/>
    </ligand>
</feature>
<feature type="binding site" evidence="1">
    <location>
        <position position="124"/>
    </location>
    <ligand>
        <name>L-aspartate</name>
        <dbReference type="ChEBI" id="CHEBI:29991"/>
    </ligand>
</feature>
<feature type="binding site" evidence="1">
    <location>
        <position position="127"/>
    </location>
    <ligand>
        <name>L-citrulline</name>
        <dbReference type="ChEBI" id="CHEBI:57743"/>
    </ligand>
</feature>
<feature type="binding site" evidence="1">
    <location>
        <position position="176"/>
    </location>
    <ligand>
        <name>L-citrulline</name>
        <dbReference type="ChEBI" id="CHEBI:57743"/>
    </ligand>
</feature>
<feature type="binding site" evidence="1">
    <location>
        <position position="185"/>
    </location>
    <ligand>
        <name>L-citrulline</name>
        <dbReference type="ChEBI" id="CHEBI:57743"/>
    </ligand>
</feature>
<feature type="binding site" evidence="1">
    <location>
        <position position="261"/>
    </location>
    <ligand>
        <name>L-citrulline</name>
        <dbReference type="ChEBI" id="CHEBI:57743"/>
    </ligand>
</feature>
<feature type="binding site" evidence="1">
    <location>
        <position position="273"/>
    </location>
    <ligand>
        <name>L-citrulline</name>
        <dbReference type="ChEBI" id="CHEBI:57743"/>
    </ligand>
</feature>
<name>ASSY_CHLPB</name>
<reference key="1">
    <citation type="submission" date="2008-06" db="EMBL/GenBank/DDBJ databases">
        <title>Complete sequence of Chlorobium phaeobacteroides BS1.</title>
        <authorList>
            <consortium name="US DOE Joint Genome Institute"/>
            <person name="Lucas S."/>
            <person name="Copeland A."/>
            <person name="Lapidus A."/>
            <person name="Glavina del Rio T."/>
            <person name="Dalin E."/>
            <person name="Tice H."/>
            <person name="Bruce D."/>
            <person name="Goodwin L."/>
            <person name="Pitluck S."/>
            <person name="Schmutz J."/>
            <person name="Larimer F."/>
            <person name="Land M."/>
            <person name="Hauser L."/>
            <person name="Kyrpides N."/>
            <person name="Ovchinnikova G."/>
            <person name="Li T."/>
            <person name="Liu Z."/>
            <person name="Zhao F."/>
            <person name="Overmann J."/>
            <person name="Bryant D.A."/>
            <person name="Richardson P."/>
        </authorList>
    </citation>
    <scope>NUCLEOTIDE SEQUENCE [LARGE SCALE GENOMIC DNA]</scope>
    <source>
        <strain>BS1</strain>
    </source>
</reference>
<organism>
    <name type="scientific">Chlorobium phaeobacteroides (strain BS1)</name>
    <dbReference type="NCBI Taxonomy" id="331678"/>
    <lineage>
        <taxon>Bacteria</taxon>
        <taxon>Pseudomonadati</taxon>
        <taxon>Chlorobiota</taxon>
        <taxon>Chlorobiia</taxon>
        <taxon>Chlorobiales</taxon>
        <taxon>Chlorobiaceae</taxon>
        <taxon>Chlorobium/Pelodictyon group</taxon>
        <taxon>Chlorobium</taxon>
    </lineage>
</organism>
<sequence length="402" mass="44697">MKREKIALAYSGGLDTSVMIKWLKDKYDADIIAVTGNLGQEKEIENLEQKAFDTGASGFSFLDLRKEFVENYIWPALKAGALYEEVYPLATALGRPLLAKALVDVALSEDCTMIAHGCTGKGNDQVRFEVTFASLAPHLKVLAPLREWEFNSREAEMAYAEKHGIPVSATKKSPYSIDENIWGISIECGVLEDPMVAPPEDAYQITTSPEKAPDNAAVIDIEFEQGVPVALDGRKMEGLDLIVELNKHGAAHGVGRLDMIENRVVGIKSREIYEAPAATILHFAHRELERLTLEKTVFQYKNTISQDYANLIYNGTWFSPMREALDGFVDATQKHVTGLVRVKLFKGSVTLLGRTSPWSLYNEELATYTEADTFNHKAAEGFIHLYGLGLKTYSEVQANNRK</sequence>
<keyword id="KW-0028">Amino-acid biosynthesis</keyword>
<keyword id="KW-0055">Arginine biosynthesis</keyword>
<keyword id="KW-0067">ATP-binding</keyword>
<keyword id="KW-0963">Cytoplasm</keyword>
<keyword id="KW-0436">Ligase</keyword>
<keyword id="KW-0547">Nucleotide-binding</keyword>
<proteinExistence type="inferred from homology"/>
<gene>
    <name evidence="1" type="primary">argG</name>
    <name type="ordered locus">Cphamn1_1332</name>
</gene>
<accession>B3EJ62</accession>
<comment type="catalytic activity">
    <reaction evidence="1">
        <text>L-citrulline + L-aspartate + ATP = 2-(N(omega)-L-arginino)succinate + AMP + diphosphate + H(+)</text>
        <dbReference type="Rhea" id="RHEA:10932"/>
        <dbReference type="ChEBI" id="CHEBI:15378"/>
        <dbReference type="ChEBI" id="CHEBI:29991"/>
        <dbReference type="ChEBI" id="CHEBI:30616"/>
        <dbReference type="ChEBI" id="CHEBI:33019"/>
        <dbReference type="ChEBI" id="CHEBI:57472"/>
        <dbReference type="ChEBI" id="CHEBI:57743"/>
        <dbReference type="ChEBI" id="CHEBI:456215"/>
        <dbReference type="EC" id="6.3.4.5"/>
    </reaction>
</comment>
<comment type="pathway">
    <text evidence="1">Amino-acid biosynthesis; L-arginine biosynthesis; L-arginine from L-ornithine and carbamoyl phosphate: step 2/3.</text>
</comment>
<comment type="subunit">
    <text evidence="1">Homotetramer.</text>
</comment>
<comment type="subcellular location">
    <subcellularLocation>
        <location evidence="1">Cytoplasm</location>
    </subcellularLocation>
</comment>
<comment type="similarity">
    <text evidence="1">Belongs to the argininosuccinate synthase family. Type 1 subfamily.</text>
</comment>
<evidence type="ECO:0000255" key="1">
    <source>
        <dbReference type="HAMAP-Rule" id="MF_00005"/>
    </source>
</evidence>
<protein>
    <recommendedName>
        <fullName evidence="1">Argininosuccinate synthase</fullName>
        <ecNumber evidence="1">6.3.4.5</ecNumber>
    </recommendedName>
    <alternativeName>
        <fullName evidence="1">Citrulline--aspartate ligase</fullName>
    </alternativeName>
</protein>
<dbReference type="EC" id="6.3.4.5" evidence="1"/>
<dbReference type="EMBL" id="CP001101">
    <property type="protein sequence ID" value="ACE04262.1"/>
    <property type="molecule type" value="Genomic_DNA"/>
</dbReference>
<dbReference type="SMR" id="B3EJ62"/>
<dbReference type="STRING" id="331678.Cphamn1_1332"/>
<dbReference type="KEGG" id="cpb:Cphamn1_1332"/>
<dbReference type="eggNOG" id="COG0137">
    <property type="taxonomic scope" value="Bacteria"/>
</dbReference>
<dbReference type="HOGENOM" id="CLU_032784_4_2_10"/>
<dbReference type="OrthoDB" id="9801641at2"/>
<dbReference type="UniPathway" id="UPA00068">
    <property type="reaction ID" value="UER00113"/>
</dbReference>
<dbReference type="GO" id="GO:0005737">
    <property type="term" value="C:cytoplasm"/>
    <property type="evidence" value="ECO:0007669"/>
    <property type="project" value="UniProtKB-SubCell"/>
</dbReference>
<dbReference type="GO" id="GO:0004055">
    <property type="term" value="F:argininosuccinate synthase activity"/>
    <property type="evidence" value="ECO:0007669"/>
    <property type="project" value="UniProtKB-UniRule"/>
</dbReference>
<dbReference type="GO" id="GO:0005524">
    <property type="term" value="F:ATP binding"/>
    <property type="evidence" value="ECO:0007669"/>
    <property type="project" value="UniProtKB-UniRule"/>
</dbReference>
<dbReference type="GO" id="GO:0000053">
    <property type="term" value="P:argininosuccinate metabolic process"/>
    <property type="evidence" value="ECO:0007669"/>
    <property type="project" value="TreeGrafter"/>
</dbReference>
<dbReference type="GO" id="GO:0006526">
    <property type="term" value="P:L-arginine biosynthetic process"/>
    <property type="evidence" value="ECO:0007669"/>
    <property type="project" value="UniProtKB-UniRule"/>
</dbReference>
<dbReference type="GO" id="GO:0000050">
    <property type="term" value="P:urea cycle"/>
    <property type="evidence" value="ECO:0007669"/>
    <property type="project" value="TreeGrafter"/>
</dbReference>
<dbReference type="CDD" id="cd01999">
    <property type="entry name" value="ASS"/>
    <property type="match status" value="1"/>
</dbReference>
<dbReference type="FunFam" id="3.40.50.620:FF:000019">
    <property type="entry name" value="Argininosuccinate synthase"/>
    <property type="match status" value="1"/>
</dbReference>
<dbReference type="FunFam" id="3.90.1260.10:FF:000007">
    <property type="entry name" value="Argininosuccinate synthase"/>
    <property type="match status" value="1"/>
</dbReference>
<dbReference type="Gene3D" id="3.90.1260.10">
    <property type="entry name" value="Argininosuccinate synthetase, chain A, domain 2"/>
    <property type="match status" value="1"/>
</dbReference>
<dbReference type="Gene3D" id="3.40.50.620">
    <property type="entry name" value="HUPs"/>
    <property type="match status" value="1"/>
</dbReference>
<dbReference type="Gene3D" id="1.20.5.470">
    <property type="entry name" value="Single helix bin"/>
    <property type="match status" value="1"/>
</dbReference>
<dbReference type="HAMAP" id="MF_00005">
    <property type="entry name" value="Arg_succ_synth_type1"/>
    <property type="match status" value="1"/>
</dbReference>
<dbReference type="InterPro" id="IPR048268">
    <property type="entry name" value="Arginosuc_syn_C"/>
</dbReference>
<dbReference type="InterPro" id="IPR048267">
    <property type="entry name" value="Arginosuc_syn_N"/>
</dbReference>
<dbReference type="InterPro" id="IPR001518">
    <property type="entry name" value="Arginosuc_synth"/>
</dbReference>
<dbReference type="InterPro" id="IPR018223">
    <property type="entry name" value="Arginosuc_synth_CS"/>
</dbReference>
<dbReference type="InterPro" id="IPR023434">
    <property type="entry name" value="Arginosuc_synth_type_1_subfam"/>
</dbReference>
<dbReference type="InterPro" id="IPR024074">
    <property type="entry name" value="AS_cat/multimer_dom_body"/>
</dbReference>
<dbReference type="InterPro" id="IPR014729">
    <property type="entry name" value="Rossmann-like_a/b/a_fold"/>
</dbReference>
<dbReference type="NCBIfam" id="TIGR00032">
    <property type="entry name" value="argG"/>
    <property type="match status" value="1"/>
</dbReference>
<dbReference type="NCBIfam" id="NF001770">
    <property type="entry name" value="PRK00509.1"/>
    <property type="match status" value="1"/>
</dbReference>
<dbReference type="PANTHER" id="PTHR11587">
    <property type="entry name" value="ARGININOSUCCINATE SYNTHASE"/>
    <property type="match status" value="1"/>
</dbReference>
<dbReference type="PANTHER" id="PTHR11587:SF2">
    <property type="entry name" value="ARGININOSUCCINATE SYNTHASE"/>
    <property type="match status" value="1"/>
</dbReference>
<dbReference type="Pfam" id="PF20979">
    <property type="entry name" value="Arginosuc_syn_C"/>
    <property type="match status" value="1"/>
</dbReference>
<dbReference type="Pfam" id="PF00764">
    <property type="entry name" value="Arginosuc_synth"/>
    <property type="match status" value="1"/>
</dbReference>
<dbReference type="SUPFAM" id="SSF52402">
    <property type="entry name" value="Adenine nucleotide alpha hydrolases-like"/>
    <property type="match status" value="1"/>
</dbReference>
<dbReference type="SUPFAM" id="SSF69864">
    <property type="entry name" value="Argininosuccinate synthetase, C-terminal domain"/>
    <property type="match status" value="1"/>
</dbReference>
<dbReference type="PROSITE" id="PS00564">
    <property type="entry name" value="ARGININOSUCCIN_SYN_1"/>
    <property type="match status" value="1"/>
</dbReference>
<dbReference type="PROSITE" id="PS00565">
    <property type="entry name" value="ARGININOSUCCIN_SYN_2"/>
    <property type="match status" value="1"/>
</dbReference>